<protein>
    <recommendedName>
        <fullName>CCAAT/enhancer-binding protein delta</fullName>
        <shortName>C/EBP delta</shortName>
    </recommendedName>
</protein>
<keyword id="KW-0010">Activator</keyword>
<keyword id="KW-0238">DNA-binding</keyword>
<keyword id="KW-1017">Isopeptide bond</keyword>
<keyword id="KW-0539">Nucleus</keyword>
<keyword id="KW-1185">Reference proteome</keyword>
<keyword id="KW-0804">Transcription</keyword>
<keyword id="KW-0805">Transcription regulation</keyword>
<keyword id="KW-0832">Ubl conjugation</keyword>
<organism>
    <name type="scientific">Ovis aries</name>
    <name type="common">Sheep</name>
    <dbReference type="NCBI Taxonomy" id="9940"/>
    <lineage>
        <taxon>Eukaryota</taxon>
        <taxon>Metazoa</taxon>
        <taxon>Chordata</taxon>
        <taxon>Craniata</taxon>
        <taxon>Vertebrata</taxon>
        <taxon>Euteleostomi</taxon>
        <taxon>Mammalia</taxon>
        <taxon>Eutheria</taxon>
        <taxon>Laurasiatheria</taxon>
        <taxon>Artiodactyla</taxon>
        <taxon>Ruminantia</taxon>
        <taxon>Pecora</taxon>
        <taxon>Bovidae</taxon>
        <taxon>Caprinae</taxon>
        <taxon>Ovis</taxon>
    </lineage>
</organism>
<accession>Q9N0J3</accession>
<reference key="1">
    <citation type="journal article" date="2000" name="Biochem. Biophys. Res. Commun.">
        <title>The ovine CCAAT-enhancer binding protein delta gene: cloning, characterization, and species-specific autoregulation.</title>
        <authorList>
            <person name="Davies G.E."/>
            <person name="Sabatakos G."/>
            <person name="Cryer A."/>
            <person name="Ramji D.P."/>
        </authorList>
    </citation>
    <scope>NUCLEOTIDE SEQUENCE [GENOMIC DNA]</scope>
    <scope>FUNCTION</scope>
</reference>
<gene>
    <name type="primary">CEBPD</name>
</gene>
<sequence length="255" mass="27040">MTCALQPGRPSGGAPWTAEPAAFYEPGRAGKPGRGAEPAAPAMYDDESAIDFSAYIDSMAAVPTLELCHDELFADLFNSNHKAGALELLPGGPARLGGPGPAPRPLKREPDWGDGDAPGSLLPAQVAACAQTVVSLAPAAQPTPPASPDPPRRSPAPPAPGPARDKAAGKRGPDRGSPEYRQRRERNNIAVRKSRDKAKRRNQEMQQKLVELSAENEKLQQRVEQLTRDLAGLRRFFKQLPGAPFLPGAGAADAR</sequence>
<feature type="chain" id="PRO_0000310864" description="CCAAT/enhancer-binding protein delta">
    <location>
        <begin position="1"/>
        <end position="255"/>
    </location>
</feature>
<feature type="domain" description="bZIP" evidence="4">
    <location>
        <begin position="177"/>
        <end position="240"/>
    </location>
</feature>
<feature type="region of interest" description="Disordered" evidence="5">
    <location>
        <begin position="1"/>
        <end position="42"/>
    </location>
</feature>
<feature type="region of interest" description="Disordered" evidence="5">
    <location>
        <begin position="91"/>
        <end position="121"/>
    </location>
</feature>
<feature type="region of interest" description="Disordered" evidence="5">
    <location>
        <begin position="138"/>
        <end position="206"/>
    </location>
</feature>
<feature type="region of interest" description="Basic motif" evidence="4">
    <location>
        <begin position="181"/>
        <end position="208"/>
    </location>
</feature>
<feature type="region of interest" description="Leucine-zipper" evidence="4">
    <location>
        <begin position="212"/>
        <end position="240"/>
    </location>
</feature>
<feature type="compositionally biased region" description="Pro residues" evidence="5">
    <location>
        <begin position="141"/>
        <end position="161"/>
    </location>
</feature>
<feature type="compositionally biased region" description="Basic and acidic residues" evidence="5">
    <location>
        <begin position="163"/>
        <end position="187"/>
    </location>
</feature>
<feature type="cross-link" description="Glycyl lysine isopeptide (Lys-Gly) (interchain with G-Cter in SUMO)" evidence="1">
    <location>
        <position position="107"/>
    </location>
</feature>
<dbReference type="EMBL" id="AJ276820">
    <property type="protein sequence ID" value="CAB92973.1"/>
    <property type="molecule type" value="Genomic_DNA"/>
</dbReference>
<dbReference type="PIR" id="JC7264">
    <property type="entry name" value="JC7264"/>
</dbReference>
<dbReference type="SMR" id="Q9N0J3"/>
<dbReference type="eggNOG" id="KOG3119">
    <property type="taxonomic scope" value="Eukaryota"/>
</dbReference>
<dbReference type="Proteomes" id="UP000002356">
    <property type="component" value="Unplaced"/>
</dbReference>
<dbReference type="GO" id="GO:0005634">
    <property type="term" value="C:nucleus"/>
    <property type="evidence" value="ECO:0007669"/>
    <property type="project" value="UniProtKB-SubCell"/>
</dbReference>
<dbReference type="GO" id="GO:0000981">
    <property type="term" value="F:DNA-binding transcription factor activity, RNA polymerase II-specific"/>
    <property type="evidence" value="ECO:0007669"/>
    <property type="project" value="TreeGrafter"/>
</dbReference>
<dbReference type="GO" id="GO:0000978">
    <property type="term" value="F:RNA polymerase II cis-regulatory region sequence-specific DNA binding"/>
    <property type="evidence" value="ECO:0007669"/>
    <property type="project" value="TreeGrafter"/>
</dbReference>
<dbReference type="GO" id="GO:0006351">
    <property type="term" value="P:DNA-templated transcription"/>
    <property type="evidence" value="ECO:0007669"/>
    <property type="project" value="InterPro"/>
</dbReference>
<dbReference type="GO" id="GO:0045595">
    <property type="term" value="P:regulation of cell differentiation"/>
    <property type="evidence" value="ECO:0007669"/>
    <property type="project" value="TreeGrafter"/>
</dbReference>
<dbReference type="CDD" id="cd14714">
    <property type="entry name" value="bZIP_CEBPD"/>
    <property type="match status" value="1"/>
</dbReference>
<dbReference type="FunFam" id="1.20.5.170:FF:000028">
    <property type="entry name" value="CCAAT/enhancer-binding protein beta"/>
    <property type="match status" value="1"/>
</dbReference>
<dbReference type="Gene3D" id="1.20.5.170">
    <property type="match status" value="1"/>
</dbReference>
<dbReference type="InterPro" id="IPR004827">
    <property type="entry name" value="bZIP"/>
</dbReference>
<dbReference type="InterPro" id="IPR046347">
    <property type="entry name" value="bZIP_sf"/>
</dbReference>
<dbReference type="InterPro" id="IPR031106">
    <property type="entry name" value="C/EBP"/>
</dbReference>
<dbReference type="InterPro" id="IPR016468">
    <property type="entry name" value="C/EBP_chordates"/>
</dbReference>
<dbReference type="PANTHER" id="PTHR23334">
    <property type="entry name" value="CCAAT/ENHANCER BINDING PROTEIN"/>
    <property type="match status" value="1"/>
</dbReference>
<dbReference type="PANTHER" id="PTHR23334:SF3">
    <property type="entry name" value="CCAAT_ENHANCER-BINDING PROTEIN DELTA"/>
    <property type="match status" value="1"/>
</dbReference>
<dbReference type="Pfam" id="PF07716">
    <property type="entry name" value="bZIP_2"/>
    <property type="match status" value="1"/>
</dbReference>
<dbReference type="PIRSF" id="PIRSF005879">
    <property type="entry name" value="CCAAT/enhancer-binding"/>
    <property type="match status" value="1"/>
</dbReference>
<dbReference type="SMART" id="SM00338">
    <property type="entry name" value="BRLZ"/>
    <property type="match status" value="1"/>
</dbReference>
<dbReference type="SUPFAM" id="SSF57959">
    <property type="entry name" value="Leucine zipper domain"/>
    <property type="match status" value="1"/>
</dbReference>
<dbReference type="PROSITE" id="PS50217">
    <property type="entry name" value="BZIP"/>
    <property type="match status" value="1"/>
</dbReference>
<name>CEBPD_SHEEP</name>
<proteinExistence type="inferred from homology"/>
<comment type="function">
    <text evidence="2 6">Transcription activator that recognizes two different DNA motifs: the CCAAT homology common to many promoters and the enhanced core homology common to many enhancers (PubMed:10799300). Important transcription factor regulating the expression of genes involved in immune and inflammatory responses. Transcriptional activator that enhances IL6 transcription alone and as heterodimer with CEBPB (By similarity).</text>
</comment>
<comment type="subunit">
    <text evidence="2 3">Binds DNA as a homodimer and as a heterodimer. Can form stable heterodimers with CEBPA, CEBPB and CEBPE. Directly interacts with SPI1/PU.1; this interaction does not affect DNA-binding properties of each partner. Interacts with PRDM16.</text>
</comment>
<comment type="subcellular location">
    <subcellularLocation>
        <location evidence="4 8">Nucleus</location>
    </subcellularLocation>
</comment>
<comment type="similarity">
    <text evidence="7">Belongs to the bZIP family. C/EBP subfamily.</text>
</comment>
<evidence type="ECO:0000250" key="1"/>
<evidence type="ECO:0000250" key="2">
    <source>
        <dbReference type="UniProtKB" id="P49716"/>
    </source>
</evidence>
<evidence type="ECO:0000250" key="3">
    <source>
        <dbReference type="UniProtKB" id="Q00322"/>
    </source>
</evidence>
<evidence type="ECO:0000255" key="4">
    <source>
        <dbReference type="PROSITE-ProRule" id="PRU00978"/>
    </source>
</evidence>
<evidence type="ECO:0000256" key="5">
    <source>
        <dbReference type="SAM" id="MobiDB-lite"/>
    </source>
</evidence>
<evidence type="ECO:0000269" key="6">
    <source>
    </source>
</evidence>
<evidence type="ECO:0000305" key="7"/>
<evidence type="ECO:0000305" key="8">
    <source>
    </source>
</evidence>